<reference key="1">
    <citation type="journal article" date="2011" name="J. Bacteriol.">
        <title>Genome sequence of lineage III Listeria monocytogenes strain HCC23.</title>
        <authorList>
            <person name="Steele C.L."/>
            <person name="Donaldson J.R."/>
            <person name="Paul D."/>
            <person name="Banes M.M."/>
            <person name="Arick T."/>
            <person name="Bridges S.M."/>
            <person name="Lawrence M.L."/>
        </authorList>
    </citation>
    <scope>NUCLEOTIDE SEQUENCE [LARGE SCALE GENOMIC DNA]</scope>
    <source>
        <strain>HCC23</strain>
    </source>
</reference>
<accession>B8DB29</accession>
<evidence type="ECO:0000255" key="1">
    <source>
        <dbReference type="HAMAP-Rule" id="MF_00235"/>
    </source>
</evidence>
<gene>
    <name evidence="1" type="primary">adk</name>
    <name type="ordered locus">LMHCC_2923</name>
</gene>
<dbReference type="EC" id="2.7.4.3" evidence="1"/>
<dbReference type="EMBL" id="CP001175">
    <property type="protein sequence ID" value="ACK41254.1"/>
    <property type="molecule type" value="Genomic_DNA"/>
</dbReference>
<dbReference type="RefSeq" id="WP_003739846.1">
    <property type="nucleotide sequence ID" value="NC_011660.1"/>
</dbReference>
<dbReference type="SMR" id="B8DB29"/>
<dbReference type="KEGG" id="lmh:LMHCC_2923"/>
<dbReference type="HOGENOM" id="CLU_032354_1_2_9"/>
<dbReference type="UniPathway" id="UPA00588">
    <property type="reaction ID" value="UER00649"/>
</dbReference>
<dbReference type="GO" id="GO:0005737">
    <property type="term" value="C:cytoplasm"/>
    <property type="evidence" value="ECO:0007669"/>
    <property type="project" value="UniProtKB-SubCell"/>
</dbReference>
<dbReference type="GO" id="GO:0004017">
    <property type="term" value="F:adenylate kinase activity"/>
    <property type="evidence" value="ECO:0007669"/>
    <property type="project" value="UniProtKB-UniRule"/>
</dbReference>
<dbReference type="GO" id="GO:0005524">
    <property type="term" value="F:ATP binding"/>
    <property type="evidence" value="ECO:0007669"/>
    <property type="project" value="UniProtKB-UniRule"/>
</dbReference>
<dbReference type="GO" id="GO:0008270">
    <property type="term" value="F:zinc ion binding"/>
    <property type="evidence" value="ECO:0007669"/>
    <property type="project" value="UniProtKB-UniRule"/>
</dbReference>
<dbReference type="GO" id="GO:0044209">
    <property type="term" value="P:AMP salvage"/>
    <property type="evidence" value="ECO:0007669"/>
    <property type="project" value="UniProtKB-UniRule"/>
</dbReference>
<dbReference type="CDD" id="cd01428">
    <property type="entry name" value="ADK"/>
    <property type="match status" value="1"/>
</dbReference>
<dbReference type="FunFam" id="3.40.50.300:FF:000106">
    <property type="entry name" value="Adenylate kinase mitochondrial"/>
    <property type="match status" value="1"/>
</dbReference>
<dbReference type="Gene3D" id="3.40.50.300">
    <property type="entry name" value="P-loop containing nucleotide triphosphate hydrolases"/>
    <property type="match status" value="1"/>
</dbReference>
<dbReference type="HAMAP" id="MF_00235">
    <property type="entry name" value="Adenylate_kinase_Adk"/>
    <property type="match status" value="1"/>
</dbReference>
<dbReference type="InterPro" id="IPR006259">
    <property type="entry name" value="Adenyl_kin_sub"/>
</dbReference>
<dbReference type="InterPro" id="IPR000850">
    <property type="entry name" value="Adenylat/UMP-CMP_kin"/>
</dbReference>
<dbReference type="InterPro" id="IPR033690">
    <property type="entry name" value="Adenylat_kinase_CS"/>
</dbReference>
<dbReference type="InterPro" id="IPR007862">
    <property type="entry name" value="Adenylate_kinase_lid-dom"/>
</dbReference>
<dbReference type="InterPro" id="IPR027417">
    <property type="entry name" value="P-loop_NTPase"/>
</dbReference>
<dbReference type="NCBIfam" id="TIGR01351">
    <property type="entry name" value="adk"/>
    <property type="match status" value="1"/>
</dbReference>
<dbReference type="NCBIfam" id="NF001380">
    <property type="entry name" value="PRK00279.1-2"/>
    <property type="match status" value="1"/>
</dbReference>
<dbReference type="NCBIfam" id="NF001381">
    <property type="entry name" value="PRK00279.1-3"/>
    <property type="match status" value="1"/>
</dbReference>
<dbReference type="NCBIfam" id="NF011100">
    <property type="entry name" value="PRK14527.1"/>
    <property type="match status" value="1"/>
</dbReference>
<dbReference type="PANTHER" id="PTHR23359">
    <property type="entry name" value="NUCLEOTIDE KINASE"/>
    <property type="match status" value="1"/>
</dbReference>
<dbReference type="Pfam" id="PF00406">
    <property type="entry name" value="ADK"/>
    <property type="match status" value="1"/>
</dbReference>
<dbReference type="Pfam" id="PF05191">
    <property type="entry name" value="ADK_lid"/>
    <property type="match status" value="1"/>
</dbReference>
<dbReference type="PRINTS" id="PR00094">
    <property type="entry name" value="ADENYLTKNASE"/>
</dbReference>
<dbReference type="SUPFAM" id="SSF52540">
    <property type="entry name" value="P-loop containing nucleoside triphosphate hydrolases"/>
    <property type="match status" value="1"/>
</dbReference>
<dbReference type="PROSITE" id="PS00113">
    <property type="entry name" value="ADENYLATE_KINASE"/>
    <property type="match status" value="1"/>
</dbReference>
<feature type="chain" id="PRO_1000191152" description="Adenylate kinase">
    <location>
        <begin position="1"/>
        <end position="215"/>
    </location>
</feature>
<feature type="region of interest" description="NMP" evidence="1">
    <location>
        <begin position="30"/>
        <end position="59"/>
    </location>
</feature>
<feature type="region of interest" description="LID" evidence="1">
    <location>
        <begin position="126"/>
        <end position="163"/>
    </location>
</feature>
<feature type="binding site" evidence="1">
    <location>
        <begin position="10"/>
        <end position="15"/>
    </location>
    <ligand>
        <name>ATP</name>
        <dbReference type="ChEBI" id="CHEBI:30616"/>
    </ligand>
</feature>
<feature type="binding site" evidence="1">
    <location>
        <position position="31"/>
    </location>
    <ligand>
        <name>AMP</name>
        <dbReference type="ChEBI" id="CHEBI:456215"/>
    </ligand>
</feature>
<feature type="binding site" evidence="1">
    <location>
        <position position="36"/>
    </location>
    <ligand>
        <name>AMP</name>
        <dbReference type="ChEBI" id="CHEBI:456215"/>
    </ligand>
</feature>
<feature type="binding site" evidence="1">
    <location>
        <begin position="57"/>
        <end position="59"/>
    </location>
    <ligand>
        <name>AMP</name>
        <dbReference type="ChEBI" id="CHEBI:456215"/>
    </ligand>
</feature>
<feature type="binding site" evidence="1">
    <location>
        <begin position="85"/>
        <end position="88"/>
    </location>
    <ligand>
        <name>AMP</name>
        <dbReference type="ChEBI" id="CHEBI:456215"/>
    </ligand>
</feature>
<feature type="binding site" evidence="1">
    <location>
        <position position="92"/>
    </location>
    <ligand>
        <name>AMP</name>
        <dbReference type="ChEBI" id="CHEBI:456215"/>
    </ligand>
</feature>
<feature type="binding site" evidence="1">
    <location>
        <position position="127"/>
    </location>
    <ligand>
        <name>ATP</name>
        <dbReference type="ChEBI" id="CHEBI:30616"/>
    </ligand>
</feature>
<feature type="binding site" evidence="1">
    <location>
        <position position="130"/>
    </location>
    <ligand>
        <name>Zn(2+)</name>
        <dbReference type="ChEBI" id="CHEBI:29105"/>
        <note>structural</note>
    </ligand>
</feature>
<feature type="binding site" evidence="1">
    <location>
        <position position="133"/>
    </location>
    <ligand>
        <name>Zn(2+)</name>
        <dbReference type="ChEBI" id="CHEBI:29105"/>
        <note>structural</note>
    </ligand>
</feature>
<feature type="binding site" evidence="1">
    <location>
        <begin position="136"/>
        <end position="137"/>
    </location>
    <ligand>
        <name>ATP</name>
        <dbReference type="ChEBI" id="CHEBI:30616"/>
    </ligand>
</feature>
<feature type="binding site" evidence="1">
    <location>
        <position position="150"/>
    </location>
    <ligand>
        <name>Zn(2+)</name>
        <dbReference type="ChEBI" id="CHEBI:29105"/>
        <note>structural</note>
    </ligand>
</feature>
<feature type="binding site" evidence="1">
    <location>
        <position position="153"/>
    </location>
    <ligand>
        <name>Zn(2+)</name>
        <dbReference type="ChEBI" id="CHEBI:29105"/>
        <note>structural</note>
    </ligand>
</feature>
<feature type="binding site" evidence="1">
    <location>
        <position position="160"/>
    </location>
    <ligand>
        <name>AMP</name>
        <dbReference type="ChEBI" id="CHEBI:456215"/>
    </ligand>
</feature>
<feature type="binding site" evidence="1">
    <location>
        <position position="171"/>
    </location>
    <ligand>
        <name>AMP</name>
        <dbReference type="ChEBI" id="CHEBI:456215"/>
    </ligand>
</feature>
<feature type="binding site" evidence="1">
    <location>
        <position position="199"/>
    </location>
    <ligand>
        <name>ATP</name>
        <dbReference type="ChEBI" id="CHEBI:30616"/>
    </ligand>
</feature>
<name>KAD_LISMH</name>
<proteinExistence type="inferred from homology"/>
<comment type="function">
    <text evidence="1">Catalyzes the reversible transfer of the terminal phosphate group between ATP and AMP. Plays an important role in cellular energy homeostasis and in adenine nucleotide metabolism.</text>
</comment>
<comment type="catalytic activity">
    <reaction evidence="1">
        <text>AMP + ATP = 2 ADP</text>
        <dbReference type="Rhea" id="RHEA:12973"/>
        <dbReference type="ChEBI" id="CHEBI:30616"/>
        <dbReference type="ChEBI" id="CHEBI:456215"/>
        <dbReference type="ChEBI" id="CHEBI:456216"/>
        <dbReference type="EC" id="2.7.4.3"/>
    </reaction>
</comment>
<comment type="pathway">
    <text evidence="1">Purine metabolism; AMP biosynthesis via salvage pathway; AMP from ADP: step 1/1.</text>
</comment>
<comment type="subunit">
    <text evidence="1">Monomer.</text>
</comment>
<comment type="subcellular location">
    <subcellularLocation>
        <location evidence="1">Cytoplasm</location>
    </subcellularLocation>
</comment>
<comment type="domain">
    <text evidence="1">Consists of three domains, a large central CORE domain and two small peripheral domains, NMPbind and LID, which undergo movements during catalysis. The LID domain closes over the site of phosphoryl transfer upon ATP binding. Assembling and dissambling the active center during each catalytic cycle provides an effective means to prevent ATP hydrolysis. Some bacteria have evolved a zinc-coordinating structure that stabilizes the LID domain.</text>
</comment>
<comment type="similarity">
    <text evidence="1">Belongs to the adenylate kinase family.</text>
</comment>
<keyword id="KW-0067">ATP-binding</keyword>
<keyword id="KW-0963">Cytoplasm</keyword>
<keyword id="KW-0418">Kinase</keyword>
<keyword id="KW-0479">Metal-binding</keyword>
<keyword id="KW-0545">Nucleotide biosynthesis</keyword>
<keyword id="KW-0547">Nucleotide-binding</keyword>
<keyword id="KW-0808">Transferase</keyword>
<keyword id="KW-0862">Zinc</keyword>
<sequence>MKLVLMGLPGAGKGTQAEQIVEKYNIPHISTGDMFRAAMKNNTELGRKAKSFMDNGDLVPDEVTNGIVRERLSEDDAKDGFLLDGFPRTVEQAQELENILSDLGTELDAVINIDVEKDVLMKRLTGRWICRTCGKTYHEIYNPPKVAGKCDLDGGELYQRDDDKKETVEKRLNVNMKQTKPLLDFYSEKGKLHNINGEQDIKDVFVDVEKILTSF</sequence>
<protein>
    <recommendedName>
        <fullName evidence="1">Adenylate kinase</fullName>
        <shortName evidence="1">AK</shortName>
        <ecNumber evidence="1">2.7.4.3</ecNumber>
    </recommendedName>
    <alternativeName>
        <fullName evidence="1">ATP-AMP transphosphorylase</fullName>
    </alternativeName>
    <alternativeName>
        <fullName evidence="1">ATP:AMP phosphotransferase</fullName>
    </alternativeName>
    <alternativeName>
        <fullName evidence="1">Adenylate monophosphate kinase</fullName>
    </alternativeName>
</protein>
<organism>
    <name type="scientific">Listeria monocytogenes serotype 4a (strain HCC23)</name>
    <dbReference type="NCBI Taxonomy" id="552536"/>
    <lineage>
        <taxon>Bacteria</taxon>
        <taxon>Bacillati</taxon>
        <taxon>Bacillota</taxon>
        <taxon>Bacilli</taxon>
        <taxon>Bacillales</taxon>
        <taxon>Listeriaceae</taxon>
        <taxon>Listeria</taxon>
    </lineage>
</organism>